<comment type="similarity">
    <text evidence="1">Belongs to the UPF0319 family.</text>
</comment>
<dbReference type="EMBL" id="CP000947">
    <property type="protein sequence ID" value="ACA31894.1"/>
    <property type="molecule type" value="Genomic_DNA"/>
</dbReference>
<dbReference type="RefSeq" id="WP_012341133.1">
    <property type="nucleotide sequence ID" value="NC_010519.1"/>
</dbReference>
<dbReference type="STRING" id="228400.HSM_0266"/>
<dbReference type="GeneID" id="31486546"/>
<dbReference type="KEGG" id="hsm:HSM_0266"/>
<dbReference type="HOGENOM" id="CLU_073782_2_0_6"/>
<dbReference type="HAMAP" id="MF_00789">
    <property type="entry name" value="UPF0319"/>
    <property type="match status" value="1"/>
</dbReference>
<dbReference type="InterPro" id="IPR018635">
    <property type="entry name" value="UPF0319"/>
</dbReference>
<dbReference type="NCBIfam" id="NF002516">
    <property type="entry name" value="PRK01904.1"/>
    <property type="match status" value="1"/>
</dbReference>
<dbReference type="PANTHER" id="PTHR38108">
    <property type="entry name" value="UPF0319 PROTEIN YCCT"/>
    <property type="match status" value="1"/>
</dbReference>
<dbReference type="PANTHER" id="PTHR38108:SF1">
    <property type="entry name" value="UPF0319 PROTEIN YCCT"/>
    <property type="match status" value="1"/>
</dbReference>
<dbReference type="Pfam" id="PF09829">
    <property type="entry name" value="DUF2057"/>
    <property type="match status" value="1"/>
</dbReference>
<reference key="1">
    <citation type="submission" date="2008-02" db="EMBL/GenBank/DDBJ databases">
        <title>Complete sequence of Haemophilus somnus 2336.</title>
        <authorList>
            <consortium name="US DOE Joint Genome Institute"/>
            <person name="Siddaramappa S."/>
            <person name="Duncan A.J."/>
            <person name="Challacombe J.F."/>
            <person name="Rainey D."/>
            <person name="Gillaspy A.F."/>
            <person name="Carson M."/>
            <person name="Gipson J."/>
            <person name="Gipson M."/>
            <person name="Bruce D."/>
            <person name="Detter J.C."/>
            <person name="Han C.S."/>
            <person name="Land M."/>
            <person name="Tapia R."/>
            <person name="Thompson L.S."/>
            <person name="Orvis J."/>
            <person name="Zaitshik J."/>
            <person name="Barnes G."/>
            <person name="Brettin T.S."/>
            <person name="Dyer D.W."/>
            <person name="Inzana T.J."/>
        </authorList>
    </citation>
    <scope>NUCLEOTIDE SEQUENCE [LARGE SCALE GENOMIC DNA]</scope>
    <source>
        <strain>2336</strain>
    </source>
</reference>
<gene>
    <name type="ordered locus">HSM_0266</name>
</gene>
<protein>
    <recommendedName>
        <fullName evidence="1">UPF0319 protein HSM_0266</fullName>
    </recommendedName>
</protein>
<evidence type="ECO:0000255" key="1">
    <source>
        <dbReference type="HAMAP-Rule" id="MF_00789"/>
    </source>
</evidence>
<feature type="signal peptide" evidence="1">
    <location>
        <begin position="1"/>
        <end position="21"/>
    </location>
</feature>
<feature type="chain" id="PRO_5000311179" description="UPF0319 protein HSM_0266">
    <location>
        <begin position="22"/>
        <end position="217"/>
    </location>
</feature>
<keyword id="KW-0732">Signal</keyword>
<accession>B0UW71</accession>
<proteinExistence type="inferred from homology"/>
<organism>
    <name type="scientific">Histophilus somni (strain 2336)</name>
    <name type="common">Haemophilus somnus</name>
    <dbReference type="NCBI Taxonomy" id="228400"/>
    <lineage>
        <taxon>Bacteria</taxon>
        <taxon>Pseudomonadati</taxon>
        <taxon>Pseudomonadota</taxon>
        <taxon>Gammaproteobacteria</taxon>
        <taxon>Pasteurellales</taxon>
        <taxon>Pasteurellaceae</taxon>
        <taxon>Histophilus</taxon>
    </lineage>
</organism>
<name>Y266_HISS2</name>
<sequence>MKFSFAALASAMLLTSTAAFAGIVTSSSNIDFLAIDGQKANKDLLKSTKSFNINESQTHQVVVRVSEIVRHGSDRSLYESDPIVVTFQGTNEDVVISAPKLENERDIKNFKDSPSVIVKTNSGKIIATKQEILKQEGFLPGANLIDTLSEYNASGSVASVSNFATAMPAVALGFAKAQKGKVVVQGENIAEQQLQFWFQQADKETQARFINWAKNQK</sequence>